<comment type="function">
    <text evidence="1">DNA-dependent RNA polymerase catalyzes the transcription of DNA into RNA using the four ribonucleoside triphosphates as substrates.</text>
</comment>
<comment type="catalytic activity">
    <reaction evidence="1">
        <text>RNA(n) + a ribonucleoside 5'-triphosphate = RNA(n+1) + diphosphate</text>
        <dbReference type="Rhea" id="RHEA:21248"/>
        <dbReference type="Rhea" id="RHEA-COMP:14527"/>
        <dbReference type="Rhea" id="RHEA-COMP:17342"/>
        <dbReference type="ChEBI" id="CHEBI:33019"/>
        <dbReference type="ChEBI" id="CHEBI:61557"/>
        <dbReference type="ChEBI" id="CHEBI:140395"/>
        <dbReference type="EC" id="2.7.7.6"/>
    </reaction>
</comment>
<comment type="subunit">
    <text evidence="1">The RNAP catalytic core consists of 2 alpha, 1 beta, 1 beta' and 1 omega subunit. When a sigma factor is associated with the core the holoenzyme is formed, which can initiate transcription.</text>
</comment>
<comment type="similarity">
    <text evidence="1">Belongs to the RNA polymerase beta chain family.</text>
</comment>
<dbReference type="EC" id="2.7.7.6" evidence="1"/>
<dbReference type="EMBL" id="AE015924">
    <property type="protein sequence ID" value="AAQ65599.1"/>
    <property type="molecule type" value="Genomic_DNA"/>
</dbReference>
<dbReference type="RefSeq" id="WP_005873809.1">
    <property type="nucleotide sequence ID" value="NC_002950.2"/>
</dbReference>
<dbReference type="PDB" id="8DKC">
    <property type="method" value="EM"/>
    <property type="resolution" value="3.50 A"/>
    <property type="chains" value="C=1-1269"/>
</dbReference>
<dbReference type="PDBsum" id="8DKC"/>
<dbReference type="SMR" id="Q7MX27"/>
<dbReference type="STRING" id="242619.PG_0394"/>
<dbReference type="EnsemblBacteria" id="AAQ65599">
    <property type="protein sequence ID" value="AAQ65599"/>
    <property type="gene ID" value="PG_0394"/>
</dbReference>
<dbReference type="KEGG" id="pgi:PG_0394"/>
<dbReference type="PATRIC" id="fig|242619.8.peg.361"/>
<dbReference type="eggNOG" id="COG0085">
    <property type="taxonomic scope" value="Bacteria"/>
</dbReference>
<dbReference type="HOGENOM" id="CLU_000524_4_3_10"/>
<dbReference type="BioCyc" id="PGIN242619:G1G02-369-MONOMER"/>
<dbReference type="Proteomes" id="UP000000588">
    <property type="component" value="Chromosome"/>
</dbReference>
<dbReference type="GO" id="GO:0000428">
    <property type="term" value="C:DNA-directed RNA polymerase complex"/>
    <property type="evidence" value="ECO:0007669"/>
    <property type="project" value="UniProtKB-KW"/>
</dbReference>
<dbReference type="GO" id="GO:0003677">
    <property type="term" value="F:DNA binding"/>
    <property type="evidence" value="ECO:0007669"/>
    <property type="project" value="UniProtKB-UniRule"/>
</dbReference>
<dbReference type="GO" id="GO:0003899">
    <property type="term" value="F:DNA-directed RNA polymerase activity"/>
    <property type="evidence" value="ECO:0007669"/>
    <property type="project" value="UniProtKB-UniRule"/>
</dbReference>
<dbReference type="GO" id="GO:0032549">
    <property type="term" value="F:ribonucleoside binding"/>
    <property type="evidence" value="ECO:0007669"/>
    <property type="project" value="InterPro"/>
</dbReference>
<dbReference type="GO" id="GO:0006351">
    <property type="term" value="P:DNA-templated transcription"/>
    <property type="evidence" value="ECO:0007669"/>
    <property type="project" value="UniProtKB-UniRule"/>
</dbReference>
<dbReference type="CDD" id="cd00653">
    <property type="entry name" value="RNA_pol_B_RPB2"/>
    <property type="match status" value="1"/>
</dbReference>
<dbReference type="Gene3D" id="2.40.50.100">
    <property type="match status" value="1"/>
</dbReference>
<dbReference type="Gene3D" id="2.40.50.150">
    <property type="match status" value="1"/>
</dbReference>
<dbReference type="Gene3D" id="3.90.1100.10">
    <property type="match status" value="2"/>
</dbReference>
<dbReference type="Gene3D" id="2.30.150.10">
    <property type="entry name" value="DNA-directed RNA polymerase, beta subunit, external 1 domain"/>
    <property type="match status" value="1"/>
</dbReference>
<dbReference type="Gene3D" id="2.40.270.10">
    <property type="entry name" value="DNA-directed RNA polymerase, subunit 2, domain 6"/>
    <property type="match status" value="2"/>
</dbReference>
<dbReference type="Gene3D" id="3.90.1800.10">
    <property type="entry name" value="RNA polymerase alpha subunit dimerisation domain"/>
    <property type="match status" value="1"/>
</dbReference>
<dbReference type="HAMAP" id="MF_01321">
    <property type="entry name" value="RNApol_bact_RpoB"/>
    <property type="match status" value="1"/>
</dbReference>
<dbReference type="InterPro" id="IPR042107">
    <property type="entry name" value="DNA-dir_RNA_pol_bsu_ext_1_sf"/>
</dbReference>
<dbReference type="InterPro" id="IPR019462">
    <property type="entry name" value="DNA-dir_RNA_pol_bsu_external_1"/>
</dbReference>
<dbReference type="InterPro" id="IPR015712">
    <property type="entry name" value="DNA-dir_RNA_pol_su2"/>
</dbReference>
<dbReference type="InterPro" id="IPR007120">
    <property type="entry name" value="DNA-dir_RNAP_su2_dom"/>
</dbReference>
<dbReference type="InterPro" id="IPR037033">
    <property type="entry name" value="DNA-dir_RNAP_su2_hyb_sf"/>
</dbReference>
<dbReference type="InterPro" id="IPR010243">
    <property type="entry name" value="RNA_pol_bsu_bac"/>
</dbReference>
<dbReference type="InterPro" id="IPR007121">
    <property type="entry name" value="RNA_pol_bsu_CS"/>
</dbReference>
<dbReference type="InterPro" id="IPR007644">
    <property type="entry name" value="RNA_pol_bsu_protrusion"/>
</dbReference>
<dbReference type="InterPro" id="IPR007642">
    <property type="entry name" value="RNA_pol_Rpb2_2"/>
</dbReference>
<dbReference type="InterPro" id="IPR007645">
    <property type="entry name" value="RNA_pol_Rpb2_3"/>
</dbReference>
<dbReference type="InterPro" id="IPR007641">
    <property type="entry name" value="RNA_pol_Rpb2_7"/>
</dbReference>
<dbReference type="InterPro" id="IPR014724">
    <property type="entry name" value="RNA_pol_RPB2_OB-fold"/>
</dbReference>
<dbReference type="NCBIfam" id="NF001616">
    <property type="entry name" value="PRK00405.1"/>
    <property type="match status" value="1"/>
</dbReference>
<dbReference type="NCBIfam" id="TIGR02013">
    <property type="entry name" value="rpoB"/>
    <property type="match status" value="1"/>
</dbReference>
<dbReference type="PANTHER" id="PTHR20856">
    <property type="entry name" value="DNA-DIRECTED RNA POLYMERASE I SUBUNIT 2"/>
    <property type="match status" value="1"/>
</dbReference>
<dbReference type="Pfam" id="PF04563">
    <property type="entry name" value="RNA_pol_Rpb2_1"/>
    <property type="match status" value="1"/>
</dbReference>
<dbReference type="Pfam" id="PF04561">
    <property type="entry name" value="RNA_pol_Rpb2_2"/>
    <property type="match status" value="2"/>
</dbReference>
<dbReference type="Pfam" id="PF04565">
    <property type="entry name" value="RNA_pol_Rpb2_3"/>
    <property type="match status" value="1"/>
</dbReference>
<dbReference type="Pfam" id="PF10385">
    <property type="entry name" value="RNA_pol_Rpb2_45"/>
    <property type="match status" value="1"/>
</dbReference>
<dbReference type="Pfam" id="PF00562">
    <property type="entry name" value="RNA_pol_Rpb2_6"/>
    <property type="match status" value="1"/>
</dbReference>
<dbReference type="Pfam" id="PF04560">
    <property type="entry name" value="RNA_pol_Rpb2_7"/>
    <property type="match status" value="1"/>
</dbReference>
<dbReference type="SUPFAM" id="SSF64484">
    <property type="entry name" value="beta and beta-prime subunits of DNA dependent RNA-polymerase"/>
    <property type="match status" value="1"/>
</dbReference>
<dbReference type="PROSITE" id="PS01166">
    <property type="entry name" value="RNA_POL_BETA"/>
    <property type="match status" value="1"/>
</dbReference>
<keyword id="KW-0002">3D-structure</keyword>
<keyword id="KW-0240">DNA-directed RNA polymerase</keyword>
<keyword id="KW-0548">Nucleotidyltransferase</keyword>
<keyword id="KW-1185">Reference proteome</keyword>
<keyword id="KW-0804">Transcription</keyword>
<keyword id="KW-0808">Transferase</keyword>
<reference key="1">
    <citation type="journal article" date="2003" name="J. Bacteriol.">
        <title>Complete genome sequence of the oral pathogenic bacterium Porphyromonas gingivalis strain W83.</title>
        <authorList>
            <person name="Nelson K.E."/>
            <person name="Fleischmann R.D."/>
            <person name="DeBoy R.T."/>
            <person name="Paulsen I.T."/>
            <person name="Fouts D.E."/>
            <person name="Eisen J.A."/>
            <person name="Daugherty S.C."/>
            <person name="Dodson R.J."/>
            <person name="Durkin A.S."/>
            <person name="Gwinn M.L."/>
            <person name="Haft D.H."/>
            <person name="Kolonay J.F."/>
            <person name="Nelson W.C."/>
            <person name="Mason T.M."/>
            <person name="Tallon L."/>
            <person name="Gray J."/>
            <person name="Granger D."/>
            <person name="Tettelin H."/>
            <person name="Dong H."/>
            <person name="Galvin J.L."/>
            <person name="Duncan M.J."/>
            <person name="Dewhirst F.E."/>
            <person name="Fraser C.M."/>
        </authorList>
    </citation>
    <scope>NUCLEOTIDE SEQUENCE [LARGE SCALE GENOMIC DNA]</scope>
    <source>
        <strain>ATCC BAA-308 / W83</strain>
    </source>
</reference>
<evidence type="ECO:0000255" key="1">
    <source>
        <dbReference type="HAMAP-Rule" id="MF_01321"/>
    </source>
</evidence>
<evidence type="ECO:0007829" key="2">
    <source>
        <dbReference type="PDB" id="8DKC"/>
    </source>
</evidence>
<feature type="chain" id="PRO_0000047936" description="DNA-directed RNA polymerase subunit beta">
    <location>
        <begin position="1"/>
        <end position="1269"/>
    </location>
</feature>
<feature type="helix" evidence="2">
    <location>
        <begin position="26"/>
        <end position="35"/>
    </location>
</feature>
<feature type="strand" evidence="2">
    <location>
        <begin position="46"/>
        <end position="49"/>
    </location>
</feature>
<feature type="helix" evidence="2">
    <location>
        <begin position="50"/>
        <end position="57"/>
    </location>
</feature>
<feature type="strand" evidence="2">
    <location>
        <begin position="66"/>
        <end position="76"/>
    </location>
</feature>
<feature type="helix" evidence="2">
    <location>
        <begin position="83"/>
        <end position="89"/>
    </location>
</feature>
<feature type="strand" evidence="2">
    <location>
        <begin position="94"/>
        <end position="106"/>
    </location>
</feature>
<feature type="strand" evidence="2">
    <location>
        <begin position="110"/>
        <end position="126"/>
    </location>
</feature>
<feature type="strand" evidence="2">
    <location>
        <begin position="134"/>
        <end position="136"/>
    </location>
</feature>
<feature type="strand" evidence="2">
    <location>
        <begin position="139"/>
        <end position="143"/>
    </location>
</feature>
<feature type="strand" evidence="2">
    <location>
        <begin position="152"/>
        <end position="160"/>
    </location>
</feature>
<feature type="strand" evidence="2">
    <location>
        <begin position="163"/>
        <end position="172"/>
    </location>
</feature>
<feature type="strand" evidence="2">
    <location>
        <begin position="174"/>
        <end position="176"/>
    </location>
</feature>
<feature type="strand" evidence="2">
    <location>
        <begin position="179"/>
        <end position="183"/>
    </location>
</feature>
<feature type="strand" evidence="2">
    <location>
        <begin position="189"/>
        <end position="193"/>
    </location>
</feature>
<feature type="helix" evidence="2">
    <location>
        <begin position="201"/>
        <end position="208"/>
    </location>
</feature>
<feature type="helix" evidence="2">
    <location>
        <begin position="213"/>
        <end position="220"/>
    </location>
</feature>
<feature type="helix" evidence="2">
    <location>
        <begin position="307"/>
        <end position="313"/>
    </location>
</feature>
<feature type="helix" evidence="2">
    <location>
        <begin position="320"/>
        <end position="329"/>
    </location>
</feature>
<feature type="strand" evidence="2">
    <location>
        <begin position="332"/>
        <end position="335"/>
    </location>
</feature>
<feature type="helix" evidence="2">
    <location>
        <begin position="339"/>
        <end position="351"/>
    </location>
</feature>
<feature type="turn" evidence="2">
    <location>
        <begin position="353"/>
        <end position="355"/>
    </location>
</feature>
<feature type="helix" evidence="2">
    <location>
        <begin position="360"/>
        <end position="369"/>
    </location>
</feature>
<feature type="helix" evidence="2">
    <location>
        <begin position="383"/>
        <end position="397"/>
    </location>
</feature>
<feature type="helix" evidence="2">
    <location>
        <begin position="409"/>
        <end position="411"/>
    </location>
</feature>
<feature type="helix" evidence="2">
    <location>
        <begin position="417"/>
        <end position="441"/>
    </location>
</feature>
<feature type="strand" evidence="2">
    <location>
        <begin position="445"/>
        <end position="447"/>
    </location>
</feature>
<feature type="helix" evidence="2">
    <location>
        <begin position="450"/>
        <end position="453"/>
    </location>
</feature>
<feature type="helix" evidence="2">
    <location>
        <begin position="457"/>
        <end position="469"/>
    </location>
</feature>
<feature type="strand" evidence="2">
    <location>
        <begin position="471"/>
        <end position="475"/>
    </location>
</feature>
<feature type="helix" evidence="2">
    <location>
        <begin position="481"/>
        <end position="487"/>
    </location>
</feature>
<feature type="turn" evidence="2">
    <location>
        <begin position="501"/>
        <end position="503"/>
    </location>
</feature>
<feature type="helix" evidence="2">
    <location>
        <begin position="507"/>
        <end position="509"/>
    </location>
</feature>
<feature type="turn" evidence="2">
    <location>
        <begin position="516"/>
        <end position="518"/>
    </location>
</feature>
<feature type="turn" evidence="2">
    <location>
        <begin position="528"/>
        <end position="533"/>
    </location>
</feature>
<feature type="strand" evidence="2">
    <location>
        <begin position="544"/>
        <end position="546"/>
    </location>
</feature>
<feature type="strand" evidence="2">
    <location>
        <begin position="548"/>
        <end position="556"/>
    </location>
</feature>
<feature type="strand" evidence="2">
    <location>
        <begin position="559"/>
        <end position="571"/>
    </location>
</feature>
<feature type="helix" evidence="2">
    <location>
        <begin position="572"/>
        <end position="575"/>
    </location>
</feature>
<feature type="strand" evidence="2">
    <location>
        <begin position="583"/>
        <end position="585"/>
    </location>
</feature>
<feature type="strand" evidence="2">
    <location>
        <begin position="591"/>
        <end position="593"/>
    </location>
</feature>
<feature type="strand" evidence="2">
    <location>
        <begin position="598"/>
        <end position="601"/>
    </location>
</feature>
<feature type="strand" evidence="2">
    <location>
        <begin position="603"/>
        <end position="605"/>
    </location>
</feature>
<feature type="strand" evidence="2">
    <location>
        <begin position="616"/>
        <end position="619"/>
    </location>
</feature>
<feature type="turn" evidence="2">
    <location>
        <begin position="627"/>
        <end position="631"/>
    </location>
</feature>
<feature type="helix" evidence="2">
    <location>
        <begin position="640"/>
        <end position="650"/>
    </location>
</feature>
<feature type="turn" evidence="2">
    <location>
        <begin position="667"/>
        <end position="670"/>
    </location>
</feature>
<feature type="helix" evidence="2">
    <location>
        <begin position="671"/>
        <end position="675"/>
    </location>
</feature>
<feature type="strand" evidence="2">
    <location>
        <begin position="686"/>
        <end position="691"/>
    </location>
</feature>
<feature type="strand" evidence="2">
    <location>
        <begin position="693"/>
        <end position="700"/>
    </location>
</feature>
<feature type="helix" evidence="2">
    <location>
        <begin position="703"/>
        <end position="705"/>
    </location>
</feature>
<feature type="strand" evidence="2">
    <location>
        <begin position="716"/>
        <end position="719"/>
    </location>
</feature>
<feature type="strand" evidence="2">
    <location>
        <begin position="754"/>
        <end position="757"/>
    </location>
</feature>
<feature type="strand" evidence="2">
    <location>
        <begin position="764"/>
        <end position="771"/>
    </location>
</feature>
<feature type="turn" evidence="2">
    <location>
        <begin position="775"/>
        <end position="778"/>
    </location>
</feature>
<feature type="strand" evidence="2">
    <location>
        <begin position="779"/>
        <end position="781"/>
    </location>
</feature>
<feature type="strand" evidence="2">
    <location>
        <begin position="783"/>
        <end position="786"/>
    </location>
</feature>
<feature type="helix" evidence="2">
    <location>
        <begin position="787"/>
        <end position="791"/>
    </location>
</feature>
<feature type="strand" evidence="2">
    <location>
        <begin position="797"/>
        <end position="810"/>
    </location>
</feature>
<feature type="helix" evidence="2">
    <location>
        <begin position="826"/>
        <end position="830"/>
    </location>
</feature>
<feature type="strand" evidence="2">
    <location>
        <begin position="836"/>
        <end position="838"/>
    </location>
</feature>
<feature type="strand" evidence="2">
    <location>
        <begin position="848"/>
        <end position="851"/>
    </location>
</feature>
<feature type="strand" evidence="2">
    <location>
        <begin position="853"/>
        <end position="855"/>
    </location>
</feature>
<feature type="helix" evidence="2">
    <location>
        <begin position="865"/>
        <end position="871"/>
    </location>
</feature>
<feature type="strand" evidence="2">
    <location>
        <begin position="872"/>
        <end position="875"/>
    </location>
</feature>
<feature type="strand" evidence="2">
    <location>
        <begin position="893"/>
        <end position="895"/>
    </location>
</feature>
<feature type="helix" evidence="2">
    <location>
        <begin position="914"/>
        <end position="941"/>
    </location>
</feature>
<feature type="helix" evidence="2">
    <location>
        <begin position="955"/>
        <end position="963"/>
    </location>
</feature>
<feature type="turn" evidence="2">
    <location>
        <begin position="969"/>
        <end position="975"/>
    </location>
</feature>
<feature type="helix" evidence="2">
    <location>
        <begin position="978"/>
        <end position="981"/>
    </location>
</feature>
<feature type="strand" evidence="2">
    <location>
        <begin position="982"/>
        <end position="984"/>
    </location>
</feature>
<feature type="helix" evidence="2">
    <location>
        <begin position="989"/>
        <end position="1018"/>
    </location>
</feature>
<feature type="turn" evidence="2">
    <location>
        <begin position="1019"/>
        <end position="1021"/>
    </location>
</feature>
<feature type="strand" evidence="2">
    <location>
        <begin position="1029"/>
        <end position="1041"/>
    </location>
</feature>
<feature type="strand" evidence="2">
    <location>
        <begin position="1048"/>
        <end position="1051"/>
    </location>
</feature>
<feature type="strand" evidence="2">
    <location>
        <begin position="1057"/>
        <end position="1063"/>
    </location>
</feature>
<feature type="strand" evidence="2">
    <location>
        <begin position="1078"/>
        <end position="1081"/>
    </location>
</feature>
<feature type="helix" evidence="2">
    <location>
        <begin position="1083"/>
        <end position="1085"/>
    </location>
</feature>
<feature type="turn" evidence="2">
    <location>
        <begin position="1086"/>
        <end position="1090"/>
    </location>
</feature>
<feature type="helix" evidence="2">
    <location>
        <begin position="1093"/>
        <end position="1104"/>
    </location>
</feature>
<feature type="turn" evidence="2">
    <location>
        <begin position="1105"/>
        <end position="1107"/>
    </location>
</feature>
<feature type="strand" evidence="2">
    <location>
        <begin position="1115"/>
        <end position="1117"/>
    </location>
</feature>
<feature type="helix" evidence="2">
    <location>
        <begin position="1121"/>
        <end position="1130"/>
    </location>
</feature>
<feature type="strand" evidence="2">
    <location>
        <begin position="1135"/>
        <end position="1139"/>
    </location>
</feature>
<feature type="turn" evidence="2">
    <location>
        <begin position="1144"/>
        <end position="1146"/>
    </location>
</feature>
<feature type="strand" evidence="2">
    <location>
        <begin position="1154"/>
        <end position="1165"/>
    </location>
</feature>
<feature type="helix" evidence="2">
    <location>
        <begin position="1168"/>
        <end position="1170"/>
    </location>
</feature>
<feature type="strand" evidence="2">
    <location>
        <begin position="1173"/>
        <end position="1177"/>
    </location>
</feature>
<feature type="strand" evidence="2">
    <location>
        <begin position="1182"/>
        <end position="1185"/>
    </location>
</feature>
<feature type="strand" evidence="2">
    <location>
        <begin position="1190"/>
        <end position="1193"/>
    </location>
</feature>
<feature type="helix" evidence="2">
    <location>
        <begin position="1201"/>
        <end position="1209"/>
    </location>
</feature>
<feature type="helix" evidence="2">
    <location>
        <begin position="1215"/>
        <end position="1221"/>
    </location>
</feature>
<feature type="helix" evidence="2">
    <location>
        <begin position="1227"/>
        <end position="1239"/>
    </location>
</feature>
<feature type="helix" evidence="2">
    <location>
        <begin position="1250"/>
        <end position="1259"/>
    </location>
</feature>
<protein>
    <recommendedName>
        <fullName evidence="1">DNA-directed RNA polymerase subunit beta</fullName>
        <shortName evidence="1">RNAP subunit beta</shortName>
        <ecNumber evidence="1">2.7.7.6</ecNumber>
    </recommendedName>
    <alternativeName>
        <fullName evidence="1">RNA polymerase subunit beta</fullName>
    </alternativeName>
    <alternativeName>
        <fullName evidence="1">Transcriptase subunit beta</fullName>
    </alternativeName>
</protein>
<accession>Q7MX27</accession>
<name>RPOB_PORGI</name>
<proteinExistence type="evidence at protein level"/>
<sequence length="1269" mass="142341">MTPTTNNKRINFASIKNPLFYPDFLEVQLKSFHDFLQLDTPPERRKKEGLYKVFAENFPITDTRNNFVLEFLDYYIDPPKYSIEECLSRGLTYSVPLKAKLKLYCTDPDHEDFATVIQDVFLGPIPYMTSSGTFVINGAERVIVSQLHRSPGVFFGQSLHTNGTKLYSARIIPFKGSWIEFATDINNVMYAYIDRKKKLPVTTLLRAIGFEADKDILDIFNLAEEVKVTKANLKKCIGRKLAARVINTYIDDLSDEDTGEVVSMERITVVVDREVELTEDNIEAILNSNTQTILLHRNDSNTSDYSIIFNTLQKDPCNSEKEALYYVYRQLRNAEPADDASAREVITNLFFSDKRYDLGDVGRYRINKKLNLNIDPDIKVLTNEDIIEIIKYLIELVNSKASVDDIDHLSNRRVRTVGEQLYNQFGIGLARMARTVRDRMNVRDNEVFTPIDLVNAKTISSVVNSFFGTNALSQFMDQTNPLAEITHKRRLSALGPGGLSRERAGFEVRDVHYTHYGRLCPIETPEGPNIGLISSLCVYAKISDLGFITTPYREVKNGKVDFSDNGLKYYTAEEEEEKTVAQGNAPLDENGRFVRERVKARYESDFPLVTPDEVDLMDVSPTQIASIAAALIPFLEHDDANRALMGSNMMRQAVPLLRPESPIVGTGIEGKLVKDSRTQIVAERGGEVVFVDASCIKIRYDRTADEEFVSFDDAIVTYYLPKYRKTNQSTTIDLHPICSKGDRVEAGQILTEGYSTQGGELALGRNVQVAYMPWKGYNYEDAIVLNERMVREDFFTSVHVDEYILEVRETKRGLEELTSDIPNVSEDATRDLDENGIVRIGAHIEPGDILIGKITPKGESDPTPEEKLLRAIFGDKAGDVKDASLKATPSLRGVVIDTKLFSKAAKKKSRTSTKEAVSKLDETYAKRQQQLHERLIDKLTELTKGKTCCGVKDYLNVELIKAGSKFAKKDLEALDFNVIQLSDWTNDAHTNELIKAVAVNYLKHSKEIEAELRRRKLDETIGDELPAGIVQMAKVYIAKKRKIQVGDKMAGRHGNKGIVSKIVRQEDMPFLADGTPVDICLNPLGVPSRMNLGQIFEAVLAWAGRKMNVKFATPIFDGASLNDMNEWTDKAGLPRDGKTYLYDGGTGERFDQPATVGVTYFLKLGHMVDDKMHARSIGPYSLITQQPLGGKAQFGGQRFGEMEVWALEAFGASHILQEILTVKSDDVVGRSKAYEAIVKGDPMPTPGIPESLNVLLHELKGLGLSFSLD</sequence>
<gene>
    <name evidence="1" type="primary">rpoB</name>
    <name type="ordered locus">PG_0394</name>
</gene>
<organism>
    <name type="scientific">Porphyromonas gingivalis (strain ATCC BAA-308 / W83)</name>
    <dbReference type="NCBI Taxonomy" id="242619"/>
    <lineage>
        <taxon>Bacteria</taxon>
        <taxon>Pseudomonadati</taxon>
        <taxon>Bacteroidota</taxon>
        <taxon>Bacteroidia</taxon>
        <taxon>Bacteroidales</taxon>
        <taxon>Porphyromonadaceae</taxon>
        <taxon>Porphyromonas</taxon>
    </lineage>
</organism>